<accession>P80963</accession>
<accession>Q8UVU8</accession>
<evidence type="ECO:0000250" key="1">
    <source>
        <dbReference type="UniProtKB" id="I6L8L6"/>
    </source>
</evidence>
<evidence type="ECO:0000250" key="2">
    <source>
        <dbReference type="UniProtKB" id="P24605"/>
    </source>
</evidence>
<evidence type="ECO:0000250" key="3">
    <source>
        <dbReference type="UniProtKB" id="Q90249"/>
    </source>
</evidence>
<evidence type="ECO:0000269" key="4">
    <source>
    </source>
</evidence>
<evidence type="ECO:0000269" key="5">
    <source>
    </source>
</evidence>
<evidence type="ECO:0000303" key="6">
    <source>
    </source>
</evidence>
<evidence type="ECO:0000303" key="7">
    <source>
    </source>
</evidence>
<evidence type="ECO:0000305" key="8"/>
<evidence type="ECO:0000305" key="9">
    <source>
    </source>
</evidence>
<evidence type="ECO:0000305" key="10">
    <source>
    </source>
</evidence>
<keyword id="KW-0903">Direct protein sequencing</keyword>
<keyword id="KW-1015">Disulfide bond</keyword>
<keyword id="KW-0959">Myotoxin</keyword>
<keyword id="KW-0964">Secreted</keyword>
<keyword id="KW-0732">Signal</keyword>
<keyword id="KW-0800">Toxin</keyword>
<sequence>MRTLWIVAVLLVGVEGSMYELGKMILLETGKNAATSYIAYGCNCGVGRRGQPLDATDRCCYVHKCCYKKLTGCNPLTDRYSHSLKNKTIVCGENKPCLKEMCECDKALAICLGKNVNTYNKNYKITMKMFCKKPDAC</sequence>
<feature type="signal peptide" evidence="4 5">
    <location>
        <begin position="1"/>
        <end position="16"/>
    </location>
</feature>
<feature type="chain" id="PRO_0000022822" description="Basic phospholipase A2 homolog Bsc-K49">
    <location>
        <begin position="17"/>
        <end position="137"/>
    </location>
</feature>
<feature type="region of interest" description="Important for membrane-damaging activities in eukaryotes and bacteria; heparin-binding" evidence="2">
    <location>
        <begin position="121"/>
        <end position="133"/>
    </location>
</feature>
<feature type="site" description="Important residue of the cationic membrane-docking site (MDoS)" evidence="1">
    <location>
        <position position="121"/>
    </location>
</feature>
<feature type="site" description="Important residue of the cationic membrane-docking site (MDoS)" evidence="1">
    <location>
        <position position="124"/>
    </location>
</feature>
<feature type="site" description="Hydrophobic membrane-disruption site (MDiS)" evidence="1">
    <location>
        <position position="127"/>
    </location>
</feature>
<feature type="site" description="Cationic membrane-docking site (MDoS)" evidence="1">
    <location>
        <position position="128"/>
    </location>
</feature>
<feature type="site" description="Hydrophobic membrane-disruption site (MDiS)" evidence="1">
    <location>
        <position position="130"/>
    </location>
</feature>
<feature type="site" description="Cationic membrane-docking site (MDoS)" evidence="1">
    <location>
        <position position="133"/>
    </location>
</feature>
<feature type="disulfide bond" evidence="3">
    <location>
        <begin position="42"/>
        <end position="131"/>
    </location>
</feature>
<feature type="disulfide bond" evidence="3">
    <location>
        <begin position="44"/>
        <end position="60"/>
    </location>
</feature>
<feature type="disulfide bond" evidence="3">
    <location>
        <begin position="59"/>
        <end position="111"/>
    </location>
</feature>
<feature type="disulfide bond" evidence="3">
    <location>
        <begin position="65"/>
        <end position="137"/>
    </location>
</feature>
<feature type="disulfide bond" evidence="3">
    <location>
        <begin position="66"/>
        <end position="104"/>
    </location>
</feature>
<feature type="disulfide bond" evidence="3">
    <location>
        <begin position="73"/>
        <end position="97"/>
    </location>
</feature>
<feature type="disulfide bond" evidence="3">
    <location>
        <begin position="91"/>
        <end position="102"/>
    </location>
</feature>
<dbReference type="EMBL" id="AF374236">
    <property type="protein sequence ID" value="AAL39065.1"/>
    <property type="molecule type" value="mRNA"/>
</dbReference>
<dbReference type="SMR" id="P80963"/>
<dbReference type="GO" id="GO:0005576">
    <property type="term" value="C:extracellular region"/>
    <property type="evidence" value="ECO:0007669"/>
    <property type="project" value="UniProtKB-SubCell"/>
</dbReference>
<dbReference type="GO" id="GO:0005509">
    <property type="term" value="F:calcium ion binding"/>
    <property type="evidence" value="ECO:0007669"/>
    <property type="project" value="InterPro"/>
</dbReference>
<dbReference type="GO" id="GO:0047498">
    <property type="term" value="F:calcium-dependent phospholipase A2 activity"/>
    <property type="evidence" value="ECO:0007669"/>
    <property type="project" value="TreeGrafter"/>
</dbReference>
<dbReference type="GO" id="GO:0005543">
    <property type="term" value="F:phospholipid binding"/>
    <property type="evidence" value="ECO:0007669"/>
    <property type="project" value="TreeGrafter"/>
</dbReference>
<dbReference type="GO" id="GO:0090729">
    <property type="term" value="F:toxin activity"/>
    <property type="evidence" value="ECO:0007669"/>
    <property type="project" value="UniProtKB-KW"/>
</dbReference>
<dbReference type="GO" id="GO:0050482">
    <property type="term" value="P:arachidonate secretion"/>
    <property type="evidence" value="ECO:0007669"/>
    <property type="project" value="InterPro"/>
</dbReference>
<dbReference type="GO" id="GO:0016042">
    <property type="term" value="P:lipid catabolic process"/>
    <property type="evidence" value="ECO:0007669"/>
    <property type="project" value="InterPro"/>
</dbReference>
<dbReference type="GO" id="GO:0006644">
    <property type="term" value="P:phospholipid metabolic process"/>
    <property type="evidence" value="ECO:0007669"/>
    <property type="project" value="InterPro"/>
</dbReference>
<dbReference type="CDD" id="cd00125">
    <property type="entry name" value="PLA2c"/>
    <property type="match status" value="1"/>
</dbReference>
<dbReference type="FunFam" id="1.20.90.10:FF:000001">
    <property type="entry name" value="Basic phospholipase A2 homolog"/>
    <property type="match status" value="1"/>
</dbReference>
<dbReference type="Gene3D" id="1.20.90.10">
    <property type="entry name" value="Phospholipase A2 domain"/>
    <property type="match status" value="1"/>
</dbReference>
<dbReference type="InterPro" id="IPR001211">
    <property type="entry name" value="PLipase_A2"/>
</dbReference>
<dbReference type="InterPro" id="IPR033112">
    <property type="entry name" value="PLipase_A2_Asp_AS"/>
</dbReference>
<dbReference type="InterPro" id="IPR016090">
    <property type="entry name" value="PLipase_A2_dom"/>
</dbReference>
<dbReference type="InterPro" id="IPR036444">
    <property type="entry name" value="PLipase_A2_dom_sf"/>
</dbReference>
<dbReference type="InterPro" id="IPR033113">
    <property type="entry name" value="PLipase_A2_His_AS"/>
</dbReference>
<dbReference type="PANTHER" id="PTHR11716:SF101">
    <property type="entry name" value="BASIC PHOSPHOLIPASE A2 PA-11-LIKE"/>
    <property type="match status" value="1"/>
</dbReference>
<dbReference type="PANTHER" id="PTHR11716">
    <property type="entry name" value="PHOSPHOLIPASE A2 FAMILY MEMBER"/>
    <property type="match status" value="1"/>
</dbReference>
<dbReference type="Pfam" id="PF00068">
    <property type="entry name" value="Phospholip_A2_1"/>
    <property type="match status" value="1"/>
</dbReference>
<dbReference type="PRINTS" id="PR00389">
    <property type="entry name" value="PHPHLIPASEA2"/>
</dbReference>
<dbReference type="SMART" id="SM00085">
    <property type="entry name" value="PA2c"/>
    <property type="match status" value="1"/>
</dbReference>
<dbReference type="SUPFAM" id="SSF48619">
    <property type="entry name" value="Phospholipase A2, PLA2"/>
    <property type="match status" value="1"/>
</dbReference>
<dbReference type="PROSITE" id="PS00119">
    <property type="entry name" value="PA2_ASP"/>
    <property type="match status" value="1"/>
</dbReference>
<dbReference type="PROSITE" id="PS00118">
    <property type="entry name" value="PA2_HIS"/>
    <property type="match status" value="1"/>
</dbReference>
<organism>
    <name type="scientific">Bothriechis schlegelii</name>
    <name type="common">Eyelash palm pitviper</name>
    <dbReference type="NCBI Taxonomy" id="44725"/>
    <lineage>
        <taxon>Eukaryota</taxon>
        <taxon>Metazoa</taxon>
        <taxon>Chordata</taxon>
        <taxon>Craniata</taxon>
        <taxon>Vertebrata</taxon>
        <taxon>Euteleostomi</taxon>
        <taxon>Lepidosauria</taxon>
        <taxon>Squamata</taxon>
        <taxon>Bifurcata</taxon>
        <taxon>Unidentata</taxon>
        <taxon>Episquamata</taxon>
        <taxon>Toxicofera</taxon>
        <taxon>Serpentes</taxon>
        <taxon>Colubroidea</taxon>
        <taxon>Viperidae</taxon>
        <taxon>Crotalinae</taxon>
        <taxon>Bothriechis</taxon>
    </lineage>
</organism>
<protein>
    <recommendedName>
        <fullName evidence="6">Basic phospholipase A2 homolog Bsc-K49</fullName>
        <shortName>svPLA2 homolog</shortName>
    </recommendedName>
    <alternativeName>
        <fullName evidence="7">Myotoxin I</fullName>
    </alternativeName>
</protein>
<name>PA2H_BOTSC</name>
<proteinExistence type="evidence at protein level"/>
<reference key="1">
    <citation type="journal article" date="2001" name="Arch. Biochem. Biophys.">
        <title>Purification, sequencing, and phylogenetic analyses of novel Lys-49 phospholipases A(2) from the venoms of rattlesnakes and other pit vipers.</title>
        <authorList>
            <person name="Tsai I.-H."/>
            <person name="Chen Y.-H."/>
            <person name="Wang Y.-M."/>
            <person name="Tu M.-C."/>
            <person name="Tu A.T."/>
        </authorList>
    </citation>
    <scope>NUCLEOTIDE SEQUENCE [MRNA]</scope>
    <scope>PROTEIN SEQUENCE OF 17-45</scope>
    <scope>MASS SPECTROMETRY</scope>
    <scope>SUBCELLULAR LOCATION</scope>
    <source>
        <tissue>Venom</tissue>
        <tissue>Venom gland</tissue>
    </source>
</reference>
<reference key="2">
    <citation type="journal article" date="1997" name="Arch. Biochem. Biophys.">
        <title>Isolation and characterization of a myotoxic phospholipase A2 from the venom of the arboreal snake Bothriechis (Bothrops) schlegelii from Costa Rica.</title>
        <authorList>
            <person name="Angulo Y."/>
            <person name="Chaves E."/>
            <person name="Alape A."/>
            <person name="Rucavado A."/>
            <person name="Gutierrez J.M."/>
            <person name="Lomonte B."/>
        </authorList>
    </citation>
    <scope>PROTEIN SEQUENCE OF 17-41</scope>
    <scope>FUNCTION</scope>
    <scope>SUBUNIT</scope>
    <scope>SUBCELLULAR LOCATION</scope>
    <scope>TOXIC DOSE</scope>
    <source>
        <tissue>Venom</tissue>
    </source>
</reference>
<comment type="function">
    <text evidence="1 5">Snake venom phospholipase A2 that lacks enzymatic activity. Is myotoxic, and displays edema-inducing activities (PubMed:9056257). A model of myotoxic mechanism has been proposed: an apo Lys49-PLA2 is activated by the entrance of a hydrophobic molecule (e.g. fatty acid) at the hydrophobic channel of the protein leading to a reorientation of a monomer (By similarity). This reorientation causes a transition between 'inactive' to 'active' states, causing alignment of C-terminal and membrane-docking sites (MDoS) side-by-side and putting the membrane-disruption sites (MDiS) in the same plane, exposed to solvent and in a symmetric position for both monomers (By similarity). The MDoS region stabilizes the toxin on membrane by the interaction of charged residues with phospholipid head groups (By similarity). Subsequently, the MDiS region destabilizes the membrane with penetration of hydrophobic residues (By similarity). This insertion causes a disorganization of the membrane, allowing an uncontrolled influx of ions (i.e. calcium and sodium), and eventually triggering irreversible intracellular alterations and cell death (By similarity).</text>
</comment>
<comment type="subunit">
    <text evidence="1 5">Homodimer; non-covalently linked.</text>
</comment>
<comment type="subcellular location">
    <subcellularLocation>
        <location evidence="4 5">Secreted</location>
    </subcellularLocation>
</comment>
<comment type="tissue specificity">
    <text evidence="9 10">Expressed by the venom gland.</text>
</comment>
<comment type="mass spectrometry"/>
<comment type="toxic dose">
    <text evidence="5">LD(50) is 2.5 mg/kg by intravenous injection into mice.</text>
</comment>
<comment type="similarity">
    <text evidence="8">Belongs to the phospholipase A2 family. Group II subfamily. K49 sub-subfamily.</text>
</comment>
<comment type="caution">
    <text evidence="8">Does not bind calcium as one of the calcium-binding sites is lost (Asp-&gt;Lys in position 64, which corresponds to 'Lys-49' in the current nomenclature).</text>
</comment>